<evidence type="ECO:0000255" key="1">
    <source>
        <dbReference type="HAMAP-Rule" id="MF_00643"/>
    </source>
</evidence>
<dbReference type="EMBL" id="AF123842">
    <property type="protein sequence ID" value="AAG26247.1"/>
    <property type="molecule type" value="Genomic_DNA"/>
</dbReference>
<dbReference type="RefSeq" id="YP_008081473.1">
    <property type="nucleotide sequence ID" value="NC_021426.1"/>
</dbReference>
<dbReference type="SMR" id="Q7J1A2"/>
<dbReference type="GeneID" id="15823080"/>
<dbReference type="GO" id="GO:0009535">
    <property type="term" value="C:chloroplast thylakoid membrane"/>
    <property type="evidence" value="ECO:0007669"/>
    <property type="project" value="UniProtKB-SubCell"/>
</dbReference>
<dbReference type="GO" id="GO:0009539">
    <property type="term" value="C:photosystem II reaction center"/>
    <property type="evidence" value="ECO:0007669"/>
    <property type="project" value="InterPro"/>
</dbReference>
<dbReference type="GO" id="GO:0009055">
    <property type="term" value="F:electron transfer activity"/>
    <property type="evidence" value="ECO:0007669"/>
    <property type="project" value="UniProtKB-UniRule"/>
</dbReference>
<dbReference type="GO" id="GO:0020037">
    <property type="term" value="F:heme binding"/>
    <property type="evidence" value="ECO:0007669"/>
    <property type="project" value="InterPro"/>
</dbReference>
<dbReference type="GO" id="GO:0005506">
    <property type="term" value="F:iron ion binding"/>
    <property type="evidence" value="ECO:0007669"/>
    <property type="project" value="UniProtKB-UniRule"/>
</dbReference>
<dbReference type="GO" id="GO:0009767">
    <property type="term" value="P:photosynthetic electron transport chain"/>
    <property type="evidence" value="ECO:0007669"/>
    <property type="project" value="InterPro"/>
</dbReference>
<dbReference type="HAMAP" id="MF_00643">
    <property type="entry name" value="PSII_PsbF"/>
    <property type="match status" value="1"/>
</dbReference>
<dbReference type="InterPro" id="IPR006241">
    <property type="entry name" value="PSII_cyt_b559_bsu"/>
</dbReference>
<dbReference type="InterPro" id="IPR006216">
    <property type="entry name" value="PSII_cyt_b559_CS"/>
</dbReference>
<dbReference type="InterPro" id="IPR013081">
    <property type="entry name" value="PSII_cyt_b559_N"/>
</dbReference>
<dbReference type="NCBIfam" id="TIGR01333">
    <property type="entry name" value="cyt_b559_beta"/>
    <property type="match status" value="1"/>
</dbReference>
<dbReference type="Pfam" id="PF00283">
    <property type="entry name" value="Cytochrom_B559"/>
    <property type="match status" value="1"/>
</dbReference>
<dbReference type="PIRSF" id="PIRSF000037">
    <property type="entry name" value="PsbF"/>
    <property type="match status" value="1"/>
</dbReference>
<dbReference type="SUPFAM" id="SSF161045">
    <property type="entry name" value="Cytochrome b559 subunits"/>
    <property type="match status" value="1"/>
</dbReference>
<dbReference type="PROSITE" id="PS00537">
    <property type="entry name" value="CYTOCHROME_B559"/>
    <property type="match status" value="1"/>
</dbReference>
<comment type="function">
    <text evidence="1">This b-type cytochrome is tightly associated with the reaction center of photosystem II (PSII). PSII is a light-driven water:plastoquinone oxidoreductase that uses light energy to abstract electrons from H(2)O, generating O(2) and a proton gradient subsequently used for ATP formation. It consists of a core antenna complex that captures photons, and an electron transfer chain that converts photonic excitation into a charge separation.</text>
</comment>
<comment type="cofactor">
    <cofactor evidence="1">
        <name>heme b</name>
        <dbReference type="ChEBI" id="CHEBI:60344"/>
    </cofactor>
    <text evidence="1">With its partner (PsbE) binds heme. PSII binds additional chlorophylls, carotenoids and specific lipids.</text>
</comment>
<comment type="subunit">
    <text evidence="1">Heterodimer of an alpha subunit and a beta subunit. PSII is composed of 1 copy each of membrane proteins PsbA, PsbB, PsbC, PsbD, PsbE, PsbF, PsbH, PsbI, PsbJ, PsbK, PsbL, PsbM, PsbT, PsbX, PsbY, PsbZ, Psb30/Ycf12, at least 3 peripheral proteins of the oxygen-evolving complex and a large number of cofactors. It forms dimeric complexes.</text>
</comment>
<comment type="subcellular location">
    <subcellularLocation>
        <location evidence="1">Plastid</location>
        <location evidence="1">Chloroplast thylakoid membrane</location>
        <topology evidence="1">Single-pass membrane protein</topology>
    </subcellularLocation>
</comment>
<comment type="similarity">
    <text evidence="1">Belongs to the PsbE/PsbF family.</text>
</comment>
<geneLocation type="chloroplast"/>
<accession>Q7J1A2</accession>
<reference key="1">
    <citation type="journal article" date="2000" name="Am. J. Bot.">
        <title>Utility of 17 chloroplast genes for inferring the phylogeny of the basal angiosperms.</title>
        <authorList>
            <person name="Graham S.W."/>
            <person name="Olmstead R.G."/>
        </authorList>
    </citation>
    <scope>NUCLEOTIDE SEQUENCE [GENOMIC DNA]</scope>
</reference>
<sequence>MTIDRTYPIFTVRWLAVHGLAVPTVSFLGSISAMQFIQR</sequence>
<gene>
    <name evidence="1" type="primary">psbF</name>
</gene>
<proteinExistence type="inferred from homology"/>
<protein>
    <recommendedName>
        <fullName evidence="1">Cytochrome b559 subunit beta</fullName>
    </recommendedName>
    <alternativeName>
        <fullName evidence="1">PSII reaction center subunit VI</fullName>
    </alternativeName>
</protein>
<name>PSBF_TROAR</name>
<organism>
    <name type="scientific">Trochodendron aralioides</name>
    <name type="common">Wheel tree</name>
    <dbReference type="NCBI Taxonomy" id="4407"/>
    <lineage>
        <taxon>Eukaryota</taxon>
        <taxon>Viridiplantae</taxon>
        <taxon>Streptophyta</taxon>
        <taxon>Embryophyta</taxon>
        <taxon>Tracheophyta</taxon>
        <taxon>Spermatophyta</taxon>
        <taxon>Magnoliopsida</taxon>
        <taxon>Trochodendrales</taxon>
        <taxon>Trochodendraceae</taxon>
        <taxon>Trochodendron</taxon>
    </lineage>
</organism>
<feature type="chain" id="PRO_0000200461" description="Cytochrome b559 subunit beta">
    <location>
        <begin position="1"/>
        <end position="39"/>
    </location>
</feature>
<feature type="transmembrane region" description="Helical" evidence="1">
    <location>
        <begin position="14"/>
        <end position="30"/>
    </location>
</feature>
<feature type="binding site" description="axial binding residue" evidence="1">
    <location>
        <position position="18"/>
    </location>
    <ligand>
        <name>heme</name>
        <dbReference type="ChEBI" id="CHEBI:30413"/>
        <note>ligand shared with alpha subunit</note>
    </ligand>
    <ligandPart>
        <name>Fe</name>
        <dbReference type="ChEBI" id="CHEBI:18248"/>
    </ligandPart>
</feature>
<keyword id="KW-0150">Chloroplast</keyword>
<keyword id="KW-0249">Electron transport</keyword>
<keyword id="KW-0349">Heme</keyword>
<keyword id="KW-0408">Iron</keyword>
<keyword id="KW-0472">Membrane</keyword>
<keyword id="KW-0479">Metal-binding</keyword>
<keyword id="KW-0602">Photosynthesis</keyword>
<keyword id="KW-0604">Photosystem II</keyword>
<keyword id="KW-0934">Plastid</keyword>
<keyword id="KW-0793">Thylakoid</keyword>
<keyword id="KW-0812">Transmembrane</keyword>
<keyword id="KW-1133">Transmembrane helix</keyword>
<keyword id="KW-0813">Transport</keyword>